<feature type="signal peptide" evidence="2">
    <location>
        <begin position="1"/>
        <end position="21"/>
    </location>
</feature>
<feature type="chain" id="PRO_0000325920" description="WW domain binding protein VOPP1">
    <location>
        <begin position="22"/>
        <end position="168"/>
    </location>
</feature>
<feature type="topological domain" description="Extracellular" evidence="2">
    <location>
        <begin position="22"/>
        <end position="59"/>
    </location>
</feature>
<feature type="transmembrane region" description="Helical" evidence="2">
    <location>
        <begin position="60"/>
        <end position="80"/>
    </location>
</feature>
<feature type="topological domain" description="Cytoplasmic" evidence="2">
    <location>
        <begin position="81"/>
        <end position="168"/>
    </location>
</feature>
<feature type="region of interest" description="Disordered" evidence="3">
    <location>
        <begin position="130"/>
        <end position="168"/>
    </location>
</feature>
<feature type="compositionally biased region" description="Pro residues" evidence="3">
    <location>
        <begin position="142"/>
        <end position="160"/>
    </location>
</feature>
<gene>
    <name type="primary">vopp1</name>
    <name type="synonym">ecop</name>
</gene>
<sequence length="168" mass="19155">MKSLHCVGLYLLSLLCQLTEAKKHCWYFEGLYPTYYICRAYEDCCGSRCCVRALSIQRLWYFWFLLMMGVLFCCGAGFFIRRRMYPPLLVDEPTFNVSYTRQPAGPPGGPQQPVMPYYSDPGGAMGNPMTPSFYVQPNSPQGNPPFPPPPSYCNTPPPPYEQVVKSYK</sequence>
<proteinExistence type="evidence at transcript level"/>
<protein>
    <recommendedName>
        <fullName evidence="4">WW domain binding protein VOPP1</fullName>
    </recommendedName>
    <alternativeName>
        <fullName>EGFR-coamplified and overexpressed protein homolog</fullName>
        <shortName>ECop</shortName>
    </alternativeName>
    <alternativeName>
        <fullName>Vesicular, overexpressed in cancer, prosurvival protein 1</fullName>
    </alternativeName>
</protein>
<organism>
    <name type="scientific">Xenopus laevis</name>
    <name type="common">African clawed frog</name>
    <dbReference type="NCBI Taxonomy" id="8355"/>
    <lineage>
        <taxon>Eukaryota</taxon>
        <taxon>Metazoa</taxon>
        <taxon>Chordata</taxon>
        <taxon>Craniata</taxon>
        <taxon>Vertebrata</taxon>
        <taxon>Euteleostomi</taxon>
        <taxon>Amphibia</taxon>
        <taxon>Batrachia</taxon>
        <taxon>Anura</taxon>
        <taxon>Pipoidea</taxon>
        <taxon>Pipidae</taxon>
        <taxon>Xenopodinae</taxon>
        <taxon>Xenopus</taxon>
        <taxon>Xenopus</taxon>
    </lineage>
</organism>
<dbReference type="EMBL" id="BC084358">
    <property type="protein sequence ID" value="AAH84358.1"/>
    <property type="molecule type" value="mRNA"/>
</dbReference>
<dbReference type="RefSeq" id="NP_001088316.1">
    <property type="nucleotide sequence ID" value="NM_001094847.1"/>
</dbReference>
<dbReference type="DNASU" id="495153"/>
<dbReference type="GeneID" id="495153"/>
<dbReference type="KEGG" id="xla:495153"/>
<dbReference type="AGR" id="Xenbase:XB-GENE-5807306"/>
<dbReference type="CTD" id="495153"/>
<dbReference type="Xenbase" id="XB-GENE-5807306">
    <property type="gene designation" value="vopp1.S"/>
</dbReference>
<dbReference type="OMA" id="FLECIEA"/>
<dbReference type="OrthoDB" id="6629737at2759"/>
<dbReference type="Proteomes" id="UP000186698">
    <property type="component" value="Chromosome 6S"/>
</dbReference>
<dbReference type="Bgee" id="495153">
    <property type="expression patterns" value="Expressed in brain and 15 other cell types or tissues"/>
</dbReference>
<dbReference type="GO" id="GO:0030659">
    <property type="term" value="C:cytoplasmic vesicle membrane"/>
    <property type="evidence" value="ECO:0000250"/>
    <property type="project" value="UniProtKB"/>
</dbReference>
<dbReference type="GO" id="GO:0031902">
    <property type="term" value="C:late endosome membrane"/>
    <property type="evidence" value="ECO:0007669"/>
    <property type="project" value="UniProtKB-SubCell"/>
</dbReference>
<dbReference type="GO" id="GO:0005765">
    <property type="term" value="C:lysosomal membrane"/>
    <property type="evidence" value="ECO:0007669"/>
    <property type="project" value="UniProtKB-SubCell"/>
</dbReference>
<dbReference type="GO" id="GO:0031090">
    <property type="term" value="C:organelle membrane"/>
    <property type="evidence" value="ECO:0000250"/>
    <property type="project" value="UniProtKB"/>
</dbReference>
<dbReference type="InterPro" id="IPR026229">
    <property type="entry name" value="VOPP1"/>
</dbReference>
<dbReference type="PANTHER" id="PTHR14971">
    <property type="entry name" value="VESICULAR, OVEREXPRESSED IN CANCER, PROSURVIVAL PROTEIN 1"/>
    <property type="match status" value="1"/>
</dbReference>
<dbReference type="PANTHER" id="PTHR14971:SF2">
    <property type="entry name" value="VESICULAR, OVEREXPRESSED IN CANCER, PROSURVIVAL PROTEIN 1"/>
    <property type="match status" value="1"/>
</dbReference>
<dbReference type="PRINTS" id="PR02068">
    <property type="entry name" value="VOPPROTEIN1"/>
</dbReference>
<keyword id="KW-0968">Cytoplasmic vesicle</keyword>
<keyword id="KW-0967">Endosome</keyword>
<keyword id="KW-0458">Lysosome</keyword>
<keyword id="KW-0472">Membrane</keyword>
<keyword id="KW-1185">Reference proteome</keyword>
<keyword id="KW-0732">Signal</keyword>
<keyword id="KW-0804">Transcription</keyword>
<keyword id="KW-0805">Transcription regulation</keyword>
<keyword id="KW-0812">Transmembrane</keyword>
<keyword id="KW-1133">Transmembrane helix</keyword>
<accession>Q5XGS4</accession>
<evidence type="ECO:0000250" key="1">
    <source>
        <dbReference type="UniProtKB" id="Q96AW1"/>
    </source>
</evidence>
<evidence type="ECO:0000255" key="2"/>
<evidence type="ECO:0000256" key="3">
    <source>
        <dbReference type="SAM" id="MobiDB-lite"/>
    </source>
</evidence>
<evidence type="ECO:0000305" key="4"/>
<name>VOPP1_XENLA</name>
<reference key="1">
    <citation type="submission" date="2004-10" db="EMBL/GenBank/DDBJ databases">
        <authorList>
            <consortium name="NIH - Xenopus Gene Collection (XGC) project"/>
        </authorList>
    </citation>
    <scope>NUCLEOTIDE SEQUENCE [LARGE SCALE MRNA]</scope>
    <source>
        <tissue>Eye</tissue>
    </source>
</reference>
<comment type="function">
    <text evidence="1">May be involved in the transcriptional activity of NFKB1. May regulate WWOX role as tumor suppressor.</text>
</comment>
<comment type="subcellular location">
    <subcellularLocation>
        <location evidence="1">Cytoplasmic vesicle membrane</location>
        <topology evidence="1">Single-pass type I membrane protein</topology>
    </subcellularLocation>
    <subcellularLocation>
        <location evidence="1">Late endosome membrane</location>
        <topology evidence="1">Single-pass membrane protein</topology>
    </subcellularLocation>
    <subcellularLocation>
        <location evidence="1">Lysosome membrane</location>
        <topology evidence="1">Single-pass membrane protein</topology>
    </subcellularLocation>
    <text evidence="1">When overexpressed, localizes in the nucleus and perinuclear regions.</text>
</comment>
<comment type="similarity">
    <text evidence="4">Belongs to the VOPP1/ECOP family.</text>
</comment>